<accession>Q64X36</accession>
<name>FLUC_BACFR</name>
<feature type="chain" id="PRO_0000110047" description="Fluoride-specific ion channel FluC">
    <location>
        <begin position="1"/>
        <end position="127"/>
    </location>
</feature>
<feature type="transmembrane region" description="Helical" evidence="1">
    <location>
        <begin position="4"/>
        <end position="24"/>
    </location>
</feature>
<feature type="transmembrane region" description="Helical" evidence="1">
    <location>
        <begin position="34"/>
        <end position="54"/>
    </location>
</feature>
<feature type="transmembrane region" description="Helical" evidence="1">
    <location>
        <begin position="65"/>
        <end position="85"/>
    </location>
</feature>
<feature type="transmembrane region" description="Helical" evidence="1">
    <location>
        <begin position="97"/>
        <end position="117"/>
    </location>
</feature>
<feature type="binding site" evidence="1">
    <location>
        <position position="77"/>
    </location>
    <ligand>
        <name>Na(+)</name>
        <dbReference type="ChEBI" id="CHEBI:29101"/>
        <note>structural</note>
    </ligand>
</feature>
<feature type="binding site" evidence="1">
    <location>
        <position position="80"/>
    </location>
    <ligand>
        <name>Na(+)</name>
        <dbReference type="ChEBI" id="CHEBI:29101"/>
        <note>structural</note>
    </ligand>
</feature>
<sequence>MKEIIYIFIGGGMGSVTRYLTQIAVNERLSPALFPFPWGTFAVNIIGSLLIGFFYSFSERFNLSFELRLFLTVGFCGGFTTFSTLANDSLSLLKGGFYGIFTFYVFISILLGLLAVLAGGYLGEQFK</sequence>
<proteinExistence type="inferred from homology"/>
<comment type="function">
    <text evidence="1">Fluoride-specific ion channel. Important for reducing fluoride concentration in the cell, thus reducing its toxicity.</text>
</comment>
<comment type="catalytic activity">
    <reaction evidence="1">
        <text>fluoride(in) = fluoride(out)</text>
        <dbReference type="Rhea" id="RHEA:76159"/>
        <dbReference type="ChEBI" id="CHEBI:17051"/>
    </reaction>
    <physiologicalReaction direction="left-to-right" evidence="1">
        <dbReference type="Rhea" id="RHEA:76160"/>
    </physiologicalReaction>
</comment>
<comment type="activity regulation">
    <text evidence="1">Na(+) is not transported, but it plays an essential structural role and its presence is essential for fluoride channel function.</text>
</comment>
<comment type="subcellular location">
    <subcellularLocation>
        <location evidence="1">Cell inner membrane</location>
        <topology evidence="1">Multi-pass membrane protein</topology>
    </subcellularLocation>
</comment>
<comment type="similarity">
    <text evidence="1">Belongs to the fluoride channel Fluc/FEX (TC 1.A.43) family.</text>
</comment>
<gene>
    <name evidence="1" type="primary">fluC</name>
    <name evidence="1" type="synonym">crcB</name>
    <name type="ordered locus">BF1190</name>
</gene>
<keyword id="KW-0997">Cell inner membrane</keyword>
<keyword id="KW-1003">Cell membrane</keyword>
<keyword id="KW-0407">Ion channel</keyword>
<keyword id="KW-0406">Ion transport</keyword>
<keyword id="KW-0472">Membrane</keyword>
<keyword id="KW-0479">Metal-binding</keyword>
<keyword id="KW-0915">Sodium</keyword>
<keyword id="KW-0812">Transmembrane</keyword>
<keyword id="KW-1133">Transmembrane helix</keyword>
<keyword id="KW-0813">Transport</keyword>
<protein>
    <recommendedName>
        <fullName evidence="1">Fluoride-specific ion channel FluC</fullName>
    </recommendedName>
</protein>
<evidence type="ECO:0000255" key="1">
    <source>
        <dbReference type="HAMAP-Rule" id="MF_00454"/>
    </source>
</evidence>
<reference key="1">
    <citation type="journal article" date="2004" name="Proc. Natl. Acad. Sci. U.S.A.">
        <title>Genomic analysis of Bacteroides fragilis reveals extensive DNA inversions regulating cell surface adaptation.</title>
        <authorList>
            <person name="Kuwahara T."/>
            <person name="Yamashita A."/>
            <person name="Hirakawa H."/>
            <person name="Nakayama H."/>
            <person name="Toh H."/>
            <person name="Okada N."/>
            <person name="Kuhara S."/>
            <person name="Hattori M."/>
            <person name="Hayashi T."/>
            <person name="Ohnishi Y."/>
        </authorList>
    </citation>
    <scope>NUCLEOTIDE SEQUENCE [LARGE SCALE GENOMIC DNA]</scope>
    <source>
        <strain>YCH46</strain>
    </source>
</reference>
<dbReference type="EMBL" id="AP006841">
    <property type="protein sequence ID" value="BAD47940.1"/>
    <property type="molecule type" value="Genomic_DNA"/>
</dbReference>
<dbReference type="RefSeq" id="WP_005785744.1">
    <property type="nucleotide sequence ID" value="NC_006347.1"/>
</dbReference>
<dbReference type="RefSeq" id="YP_098474.1">
    <property type="nucleotide sequence ID" value="NC_006347.1"/>
</dbReference>
<dbReference type="SMR" id="Q64X36"/>
<dbReference type="STRING" id="295405.BF1190"/>
<dbReference type="GeneID" id="60369816"/>
<dbReference type="KEGG" id="bfr:BF1190"/>
<dbReference type="PATRIC" id="fig|295405.11.peg.1178"/>
<dbReference type="HOGENOM" id="CLU_114342_2_3_10"/>
<dbReference type="OrthoDB" id="9815830at2"/>
<dbReference type="Proteomes" id="UP000002197">
    <property type="component" value="Chromosome"/>
</dbReference>
<dbReference type="GO" id="GO:0005886">
    <property type="term" value="C:plasma membrane"/>
    <property type="evidence" value="ECO:0007669"/>
    <property type="project" value="UniProtKB-SubCell"/>
</dbReference>
<dbReference type="GO" id="GO:0062054">
    <property type="term" value="F:fluoride channel activity"/>
    <property type="evidence" value="ECO:0007669"/>
    <property type="project" value="UniProtKB-UniRule"/>
</dbReference>
<dbReference type="GO" id="GO:0046872">
    <property type="term" value="F:metal ion binding"/>
    <property type="evidence" value="ECO:0007669"/>
    <property type="project" value="UniProtKB-KW"/>
</dbReference>
<dbReference type="GO" id="GO:0140114">
    <property type="term" value="P:cellular detoxification of fluoride"/>
    <property type="evidence" value="ECO:0007669"/>
    <property type="project" value="UniProtKB-UniRule"/>
</dbReference>
<dbReference type="HAMAP" id="MF_00454">
    <property type="entry name" value="FluC"/>
    <property type="match status" value="1"/>
</dbReference>
<dbReference type="InterPro" id="IPR003691">
    <property type="entry name" value="FluC"/>
</dbReference>
<dbReference type="NCBIfam" id="TIGR00494">
    <property type="entry name" value="crcB"/>
    <property type="match status" value="1"/>
</dbReference>
<dbReference type="PANTHER" id="PTHR28259">
    <property type="entry name" value="FLUORIDE EXPORT PROTEIN 1-RELATED"/>
    <property type="match status" value="1"/>
</dbReference>
<dbReference type="PANTHER" id="PTHR28259:SF1">
    <property type="entry name" value="FLUORIDE EXPORT PROTEIN 1-RELATED"/>
    <property type="match status" value="1"/>
</dbReference>
<dbReference type="Pfam" id="PF02537">
    <property type="entry name" value="CRCB"/>
    <property type="match status" value="1"/>
</dbReference>
<organism>
    <name type="scientific">Bacteroides fragilis (strain YCH46)</name>
    <dbReference type="NCBI Taxonomy" id="295405"/>
    <lineage>
        <taxon>Bacteria</taxon>
        <taxon>Pseudomonadati</taxon>
        <taxon>Bacteroidota</taxon>
        <taxon>Bacteroidia</taxon>
        <taxon>Bacteroidales</taxon>
        <taxon>Bacteroidaceae</taxon>
        <taxon>Bacteroides</taxon>
    </lineage>
</organism>